<name>CF157_HUMAN</name>
<reference key="1">
    <citation type="journal article" date="2004" name="Nature">
        <title>DNA sequence and analysis of human chromosome 9.</title>
        <authorList>
            <person name="Humphray S.J."/>
            <person name="Oliver K."/>
            <person name="Hunt A.R."/>
            <person name="Plumb R.W."/>
            <person name="Loveland J.E."/>
            <person name="Howe K.L."/>
            <person name="Andrews T.D."/>
            <person name="Searle S."/>
            <person name="Hunt S.E."/>
            <person name="Scott C.E."/>
            <person name="Jones M.C."/>
            <person name="Ainscough R."/>
            <person name="Almeida J.P."/>
            <person name="Ambrose K.D."/>
            <person name="Ashwell R.I.S."/>
            <person name="Babbage A.K."/>
            <person name="Babbage S."/>
            <person name="Bagguley C.L."/>
            <person name="Bailey J."/>
            <person name="Banerjee R."/>
            <person name="Barker D.J."/>
            <person name="Barlow K.F."/>
            <person name="Bates K."/>
            <person name="Beasley H."/>
            <person name="Beasley O."/>
            <person name="Bird C.P."/>
            <person name="Bray-Allen S."/>
            <person name="Brown A.J."/>
            <person name="Brown J.Y."/>
            <person name="Burford D."/>
            <person name="Burrill W."/>
            <person name="Burton J."/>
            <person name="Carder C."/>
            <person name="Carter N.P."/>
            <person name="Chapman J.C."/>
            <person name="Chen Y."/>
            <person name="Clarke G."/>
            <person name="Clark S.Y."/>
            <person name="Clee C.M."/>
            <person name="Clegg S."/>
            <person name="Collier R.E."/>
            <person name="Corby N."/>
            <person name="Crosier M."/>
            <person name="Cummings A.T."/>
            <person name="Davies J."/>
            <person name="Dhami P."/>
            <person name="Dunn M."/>
            <person name="Dutta I."/>
            <person name="Dyer L.W."/>
            <person name="Earthrowl M.E."/>
            <person name="Faulkner L."/>
            <person name="Fleming C.J."/>
            <person name="Frankish A."/>
            <person name="Frankland J.A."/>
            <person name="French L."/>
            <person name="Fricker D.G."/>
            <person name="Garner P."/>
            <person name="Garnett J."/>
            <person name="Ghori J."/>
            <person name="Gilbert J.G.R."/>
            <person name="Glison C."/>
            <person name="Grafham D.V."/>
            <person name="Gribble S."/>
            <person name="Griffiths C."/>
            <person name="Griffiths-Jones S."/>
            <person name="Grocock R."/>
            <person name="Guy J."/>
            <person name="Hall R.E."/>
            <person name="Hammond S."/>
            <person name="Harley J.L."/>
            <person name="Harrison E.S.I."/>
            <person name="Hart E.A."/>
            <person name="Heath P.D."/>
            <person name="Henderson C.D."/>
            <person name="Hopkins B.L."/>
            <person name="Howard P.J."/>
            <person name="Howden P.J."/>
            <person name="Huckle E."/>
            <person name="Johnson C."/>
            <person name="Johnson D."/>
            <person name="Joy A.A."/>
            <person name="Kay M."/>
            <person name="Keenan S."/>
            <person name="Kershaw J.K."/>
            <person name="Kimberley A.M."/>
            <person name="King A."/>
            <person name="Knights A."/>
            <person name="Laird G.K."/>
            <person name="Langford C."/>
            <person name="Lawlor S."/>
            <person name="Leongamornlert D.A."/>
            <person name="Leversha M."/>
            <person name="Lloyd C."/>
            <person name="Lloyd D.M."/>
            <person name="Lovell J."/>
            <person name="Martin S."/>
            <person name="Mashreghi-Mohammadi M."/>
            <person name="Matthews L."/>
            <person name="McLaren S."/>
            <person name="McLay K.E."/>
            <person name="McMurray A."/>
            <person name="Milne S."/>
            <person name="Nickerson T."/>
            <person name="Nisbett J."/>
            <person name="Nordsiek G."/>
            <person name="Pearce A.V."/>
            <person name="Peck A.I."/>
            <person name="Porter K.M."/>
            <person name="Pandian R."/>
            <person name="Pelan S."/>
            <person name="Phillimore B."/>
            <person name="Povey S."/>
            <person name="Ramsey Y."/>
            <person name="Rand V."/>
            <person name="Scharfe M."/>
            <person name="Sehra H.K."/>
            <person name="Shownkeen R."/>
            <person name="Sims S.K."/>
            <person name="Skuce C.D."/>
            <person name="Smith M."/>
            <person name="Steward C.A."/>
            <person name="Swarbreck D."/>
            <person name="Sycamore N."/>
            <person name="Tester J."/>
            <person name="Thorpe A."/>
            <person name="Tracey A."/>
            <person name="Tromans A."/>
            <person name="Thomas D.W."/>
            <person name="Wall M."/>
            <person name="Wallis J.M."/>
            <person name="West A.P."/>
            <person name="Whitehead S.L."/>
            <person name="Willey D.L."/>
            <person name="Williams S.A."/>
            <person name="Wilming L."/>
            <person name="Wray P.W."/>
            <person name="Young L."/>
            <person name="Ashurst J.L."/>
            <person name="Coulson A."/>
            <person name="Blocker H."/>
            <person name="Durbin R.M."/>
            <person name="Sulston J.E."/>
            <person name="Hubbard T."/>
            <person name="Jackson M.J."/>
            <person name="Bentley D.R."/>
            <person name="Beck S."/>
            <person name="Rogers J."/>
            <person name="Dunham I."/>
        </authorList>
    </citation>
    <scope>NUCLEOTIDE SEQUENCE [LARGE SCALE GENOMIC DNA]</scope>
</reference>
<reference key="2">
    <citation type="journal article" date="2004" name="Genome Res.">
        <title>The status, quality, and expansion of the NIH full-length cDNA project: the Mammalian Gene Collection (MGC).</title>
        <authorList>
            <consortium name="The MGC Project Team"/>
        </authorList>
    </citation>
    <scope>NUCLEOTIDE SEQUENCE [LARGE SCALE MRNA] (ISOFORM 2)</scope>
</reference>
<evidence type="ECO:0000250" key="1">
    <source>
        <dbReference type="UniProtKB" id="Q0VFX2"/>
    </source>
</evidence>
<evidence type="ECO:0000255" key="2"/>
<evidence type="ECO:0000256" key="3">
    <source>
        <dbReference type="SAM" id="MobiDB-lite"/>
    </source>
</evidence>
<evidence type="ECO:0000303" key="4">
    <source>
    </source>
</evidence>
<evidence type="ECO:0000305" key="5"/>
<evidence type="ECO:0000312" key="6">
    <source>
        <dbReference type="HGNC" id="HGNC:27843"/>
    </source>
</evidence>
<sequence length="520" mass="60533">MAPKKSVSKAGKELEVKKKGGKKEPVVAVEPPLAKEMKEFYHIQIRDLEDRLARYQRKWDELAVQEKMFRQEFEQLANNKKEIVAFLKRTLNQQVDEITDLNEQLQNLQLAKEMEKDAFEAQLAQVRHEFQETKDQLTTENIILGGKLAALEEFRLQKEEVTDKFTLLEEQVRKQENEFRDYAYNLEKKSVLDKDRLRKEIIQRVNLVANEFHKVTTNRMWETTKRAIKENNGITLQMARVSQQGMKLLQENEQLKGRQNNLCKQLELLENTQKVMARHKRGHQKIILMLTKKCQEQQQDTKEAEELRLLLSQLEQRSLQLQVDNQALKSQRDQLSLQLEQQQVDLQRLQQELANEQKVRASLEAALVQATSFLQNILQMHRDEEDSDVDVTFQPWHKEMLQQLLVMLSSTVATRPQKAACPHQESQSHGPPKESRPSIQLPRTGSLLPQLSDITPYQPGDLGLVPRQVHIPPNPQDLRLLSYITRVGTFRAHSSPEMRAPGSLKRLEKFSLPEVPLRPK</sequence>
<keyword id="KW-0025">Alternative splicing</keyword>
<keyword id="KW-0966">Cell projection</keyword>
<keyword id="KW-0969">Cilium</keyword>
<keyword id="KW-0175">Coiled coil</keyword>
<keyword id="KW-0963">Cytoplasm</keyword>
<keyword id="KW-0206">Cytoskeleton</keyword>
<keyword id="KW-0221">Differentiation</keyword>
<keyword id="KW-1267">Proteomics identification</keyword>
<keyword id="KW-1185">Reference proteome</keyword>
<keyword id="KW-0744">Spermatogenesis</keyword>
<dbReference type="EMBL" id="AL162426">
    <property type="status" value="NOT_ANNOTATED_CDS"/>
    <property type="molecule type" value="Genomic_DNA"/>
</dbReference>
<dbReference type="EMBL" id="BC141809">
    <property type="protein sequence ID" value="AAI41810.1"/>
    <property type="molecule type" value="mRNA"/>
</dbReference>
<dbReference type="CCDS" id="CCDS43878.1">
    <molecule id="Q5JU67-1"/>
</dbReference>
<dbReference type="RefSeq" id="NP_001012520.2">
    <molecule id="Q5JU67-1"/>
    <property type="nucleotide sequence ID" value="NM_001012502.3"/>
</dbReference>
<dbReference type="SMR" id="Q5JU67"/>
<dbReference type="BioGRID" id="130334">
    <property type="interactions" value="4"/>
</dbReference>
<dbReference type="FunCoup" id="Q5JU67">
    <property type="interactions" value="85"/>
</dbReference>
<dbReference type="IntAct" id="Q5JU67">
    <property type="interactions" value="3"/>
</dbReference>
<dbReference type="MINT" id="Q5JU67"/>
<dbReference type="STRING" id="9606.ENSP00000362392"/>
<dbReference type="GlyGen" id="Q5JU67">
    <property type="glycosylation" value="1 site, 1 O-linked glycan (1 site)"/>
</dbReference>
<dbReference type="iPTMnet" id="Q5JU67"/>
<dbReference type="PhosphoSitePlus" id="Q5JU67"/>
<dbReference type="BioMuta" id="CFAP157"/>
<dbReference type="DMDM" id="74742270"/>
<dbReference type="MassIVE" id="Q5JU67"/>
<dbReference type="PaxDb" id="9606-ENSP00000362392"/>
<dbReference type="PeptideAtlas" id="Q5JU67"/>
<dbReference type="ProteomicsDB" id="63255">
    <molecule id="Q5JU67-1"/>
</dbReference>
<dbReference type="ProteomicsDB" id="63256">
    <molecule id="Q5JU67-2"/>
</dbReference>
<dbReference type="Antibodypedia" id="7779">
    <property type="antibodies" value="91 antibodies from 18 providers"/>
</dbReference>
<dbReference type="DNASU" id="286207"/>
<dbReference type="Ensembl" id="ENST00000373295.7">
    <molecule id="Q5JU67-1"/>
    <property type="protein sequence ID" value="ENSP00000362392.1"/>
    <property type="gene ID" value="ENSG00000160401.15"/>
</dbReference>
<dbReference type="Ensembl" id="ENST00000614677.1">
    <molecule id="Q5JU67-2"/>
    <property type="protein sequence ID" value="ENSP00000478313.1"/>
    <property type="gene ID" value="ENSG00000160401.15"/>
</dbReference>
<dbReference type="GeneID" id="286207"/>
<dbReference type="KEGG" id="hsa:286207"/>
<dbReference type="MANE-Select" id="ENST00000373295.7">
    <property type="protein sequence ID" value="ENSP00000362392.1"/>
    <property type="RefSeq nucleotide sequence ID" value="NM_001012502.3"/>
    <property type="RefSeq protein sequence ID" value="NP_001012520.2"/>
</dbReference>
<dbReference type="UCSC" id="uc004brn.2">
    <molecule id="Q5JU67-1"/>
    <property type="organism name" value="human"/>
</dbReference>
<dbReference type="AGR" id="HGNC:27843"/>
<dbReference type="CTD" id="286207"/>
<dbReference type="GeneCards" id="CFAP157"/>
<dbReference type="HGNC" id="HGNC:27843">
    <property type="gene designation" value="CFAP157"/>
</dbReference>
<dbReference type="HPA" id="ENSG00000160401">
    <property type="expression patterns" value="Group enriched (choroid plexus, fallopian tube)"/>
</dbReference>
<dbReference type="neXtProt" id="NX_Q5JU67"/>
<dbReference type="OpenTargets" id="ENSG00000160401"/>
<dbReference type="PharmGKB" id="PA134929148"/>
<dbReference type="VEuPathDB" id="HostDB:ENSG00000160401"/>
<dbReference type="eggNOG" id="ENOG502QQK8">
    <property type="taxonomic scope" value="Eukaryota"/>
</dbReference>
<dbReference type="GeneTree" id="ENSGT00730000111240"/>
<dbReference type="HOGENOM" id="CLU_025198_2_0_1"/>
<dbReference type="InParanoid" id="Q5JU67"/>
<dbReference type="OMA" id="KIKSLCR"/>
<dbReference type="OrthoDB" id="166611at2759"/>
<dbReference type="PAN-GO" id="Q5JU67">
    <property type="GO annotations" value="3 GO annotations based on evolutionary models"/>
</dbReference>
<dbReference type="PhylomeDB" id="Q5JU67"/>
<dbReference type="TreeFam" id="TF329637"/>
<dbReference type="PathwayCommons" id="Q5JU67"/>
<dbReference type="SignaLink" id="Q5JU67"/>
<dbReference type="BioGRID-ORCS" id="286207">
    <property type="hits" value="7 hits in 1123 CRISPR screens"/>
</dbReference>
<dbReference type="GenomeRNAi" id="286207"/>
<dbReference type="Pharos" id="Q5JU67">
    <property type="development level" value="Tdark"/>
</dbReference>
<dbReference type="PRO" id="PR:Q5JU67"/>
<dbReference type="Proteomes" id="UP000005640">
    <property type="component" value="Chromosome 9"/>
</dbReference>
<dbReference type="RNAct" id="Q5JU67">
    <property type="molecule type" value="protein"/>
</dbReference>
<dbReference type="Bgee" id="ENSG00000160401">
    <property type="expression patterns" value="Expressed in right uterine tube and 119 other cell types or tissues"/>
</dbReference>
<dbReference type="ExpressionAtlas" id="Q5JU67">
    <property type="expression patterns" value="baseline and differential"/>
</dbReference>
<dbReference type="GO" id="GO:0036064">
    <property type="term" value="C:ciliary basal body"/>
    <property type="evidence" value="ECO:0000250"/>
    <property type="project" value="UniProtKB"/>
</dbReference>
<dbReference type="GO" id="GO:0005737">
    <property type="term" value="C:cytoplasm"/>
    <property type="evidence" value="ECO:0007669"/>
    <property type="project" value="UniProtKB-KW"/>
</dbReference>
<dbReference type="GO" id="GO:0008017">
    <property type="term" value="F:microtubule binding"/>
    <property type="evidence" value="ECO:0000250"/>
    <property type="project" value="UniProtKB"/>
</dbReference>
<dbReference type="GO" id="GO:0007288">
    <property type="term" value="P:sperm axoneme assembly"/>
    <property type="evidence" value="ECO:0000250"/>
    <property type="project" value="UniProtKB"/>
</dbReference>
<dbReference type="InterPro" id="IPR038844">
    <property type="entry name" value="CFAP157"/>
</dbReference>
<dbReference type="PANTHER" id="PTHR31954">
    <property type="entry name" value="CILIA- AND FLAGELLA-ASSOCIATED PROTEIN 157"/>
    <property type="match status" value="1"/>
</dbReference>
<dbReference type="PANTHER" id="PTHR31954:SF1">
    <property type="entry name" value="CILIA- AND FLAGELLA-ASSOCIATED PROTEIN 157"/>
    <property type="match status" value="1"/>
</dbReference>
<organism>
    <name type="scientific">Homo sapiens</name>
    <name type="common">Human</name>
    <dbReference type="NCBI Taxonomy" id="9606"/>
    <lineage>
        <taxon>Eukaryota</taxon>
        <taxon>Metazoa</taxon>
        <taxon>Chordata</taxon>
        <taxon>Craniata</taxon>
        <taxon>Vertebrata</taxon>
        <taxon>Euteleostomi</taxon>
        <taxon>Mammalia</taxon>
        <taxon>Eutheria</taxon>
        <taxon>Euarchontoglires</taxon>
        <taxon>Primates</taxon>
        <taxon>Haplorrhini</taxon>
        <taxon>Catarrhini</taxon>
        <taxon>Hominidae</taxon>
        <taxon>Homo</taxon>
    </lineage>
</organism>
<protein>
    <recommendedName>
        <fullName evidence="5">Cilia- and flagella-associated protein 157</fullName>
    </recommendedName>
</protein>
<feature type="chain" id="PRO_0000307224" description="Cilia- and flagella-associated protein 157">
    <location>
        <begin position="1"/>
        <end position="520"/>
    </location>
</feature>
<feature type="region of interest" description="Disordered" evidence="3">
    <location>
        <begin position="1"/>
        <end position="22"/>
    </location>
</feature>
<feature type="region of interest" description="Disordered" evidence="3">
    <location>
        <begin position="416"/>
        <end position="453"/>
    </location>
</feature>
<feature type="coiled-coil region" evidence="2">
    <location>
        <begin position="33"/>
        <end position="189"/>
    </location>
</feature>
<feature type="coiled-coil region" evidence="2">
    <location>
        <begin position="236"/>
        <end position="372"/>
    </location>
</feature>
<feature type="compositionally biased region" description="Basic and acidic residues" evidence="3">
    <location>
        <begin position="10"/>
        <end position="22"/>
    </location>
</feature>
<feature type="compositionally biased region" description="Polar residues" evidence="3">
    <location>
        <begin position="437"/>
        <end position="453"/>
    </location>
</feature>
<feature type="splice variant" id="VSP_028641" description="In isoform 2." evidence="4">
    <original>MHRDEEDSDVDVTFQPWHKEMLQQLLVMLSSTVATRPQKAACPHQE</original>
    <variation>TGKTSWKWALRLEFPGRGWVLGPLWACCHPTLTNRCTAMKRTVTLT</variation>
    <location>
        <begin position="380"/>
        <end position="425"/>
    </location>
</feature>
<feature type="splice variant" id="VSP_028642" description="In isoform 2." evidence="4">
    <location>
        <begin position="426"/>
        <end position="520"/>
    </location>
</feature>
<feature type="sequence variant" id="VAR_050845" description="In dbSNP:rs497632.">
    <original>Y</original>
    <variation>S</variation>
    <location>
        <position position="483"/>
    </location>
</feature>
<proteinExistence type="evidence at protein level"/>
<accession>Q5JU67</accession>
<accession>A5D8T9</accession>
<gene>
    <name evidence="6" type="primary">CFAP157</name>
    <name evidence="6" type="synonym">C9orf117</name>
</gene>
<comment type="function">
    <text evidence="1">Specifically required during spermatogenesis for flagellum morphogenesis and sperm motility. May be required to suppress the formation of supernumerary axonemes and ensure a correct ultrastructure.</text>
</comment>
<comment type="subunit">
    <text evidence="1">Interacts with TUBB and TUBA4A. Interacts with CEP350.</text>
</comment>
<comment type="subcellular location">
    <subcellularLocation>
        <location evidence="1">Cytoplasm</location>
        <location evidence="1">Cytoskeleton</location>
        <location evidence="1">Cilium basal body</location>
    </subcellularLocation>
</comment>
<comment type="alternative products">
    <event type="alternative splicing"/>
    <isoform>
        <id>Q5JU67-1</id>
        <name>1</name>
        <sequence type="displayed"/>
    </isoform>
    <isoform>
        <id>Q5JU67-2</id>
        <name>2</name>
        <sequence type="described" ref="VSP_028641 VSP_028642"/>
    </isoform>
</comment>
<comment type="similarity">
    <text evidence="5">Belongs to the CFAP157 family.</text>
</comment>